<feature type="chain" id="PRO_1000025964" description="Photosystem II reaction center protein M">
    <location>
        <begin position="1"/>
        <end position="34"/>
    </location>
</feature>
<feature type="transmembrane region" description="Helical" evidence="1">
    <location>
        <begin position="7"/>
        <end position="27"/>
    </location>
</feature>
<accession>Q3AUY3</accession>
<protein>
    <recommendedName>
        <fullName evidence="1">Photosystem II reaction center protein M</fullName>
        <shortName evidence="1">PSII-M</shortName>
    </recommendedName>
</protein>
<dbReference type="EMBL" id="CP000097">
    <property type="protein sequence ID" value="ABB26819.1"/>
    <property type="molecule type" value="Genomic_DNA"/>
</dbReference>
<dbReference type="RefSeq" id="WP_009789028.1">
    <property type="nucleotide sequence ID" value="NC_007513.1"/>
</dbReference>
<dbReference type="SMR" id="Q3AUY3"/>
<dbReference type="STRING" id="316279.Syncc9902_1862"/>
<dbReference type="KEGG" id="sye:Syncc9902_1862"/>
<dbReference type="eggNOG" id="ENOG50339PB">
    <property type="taxonomic scope" value="Bacteria"/>
</dbReference>
<dbReference type="HOGENOM" id="CLU_215415_0_0_3"/>
<dbReference type="OrthoDB" id="532820at2"/>
<dbReference type="Proteomes" id="UP000002712">
    <property type="component" value="Chromosome"/>
</dbReference>
<dbReference type="GO" id="GO:0009523">
    <property type="term" value="C:photosystem II"/>
    <property type="evidence" value="ECO:0007669"/>
    <property type="project" value="UniProtKB-KW"/>
</dbReference>
<dbReference type="GO" id="GO:0031676">
    <property type="term" value="C:plasma membrane-derived thylakoid membrane"/>
    <property type="evidence" value="ECO:0007669"/>
    <property type="project" value="UniProtKB-SubCell"/>
</dbReference>
<dbReference type="GO" id="GO:0019684">
    <property type="term" value="P:photosynthesis, light reaction"/>
    <property type="evidence" value="ECO:0007669"/>
    <property type="project" value="InterPro"/>
</dbReference>
<dbReference type="HAMAP" id="MF_00438">
    <property type="entry name" value="PSII_PsbM"/>
    <property type="match status" value="1"/>
</dbReference>
<dbReference type="InterPro" id="IPR007826">
    <property type="entry name" value="PSII_PsbM"/>
</dbReference>
<dbReference type="InterPro" id="IPR037269">
    <property type="entry name" value="PSII_PsbM_sf"/>
</dbReference>
<dbReference type="NCBIfam" id="TIGR03038">
    <property type="entry name" value="PS_II_psbM"/>
    <property type="match status" value="1"/>
</dbReference>
<dbReference type="Pfam" id="PF05151">
    <property type="entry name" value="PsbM"/>
    <property type="match status" value="1"/>
</dbReference>
<dbReference type="SUPFAM" id="SSF161033">
    <property type="entry name" value="Photosystem II reaction center protein M, PsbM"/>
    <property type="match status" value="1"/>
</dbReference>
<name>PSBM_SYNS9</name>
<gene>
    <name evidence="1" type="primary">psbM</name>
    <name type="ordered locus">Syncc9902_1862</name>
</gene>
<evidence type="ECO:0000255" key="1">
    <source>
        <dbReference type="HAMAP-Rule" id="MF_00438"/>
    </source>
</evidence>
<comment type="function">
    <text evidence="1">One of the components of the core complex of photosystem II (PSII). PSII is a light-driven water:plastoquinone oxidoreductase that uses light energy to abstract electrons from H(2)O, generating O(2) and a proton gradient subsequently used for ATP formation. It consists of a core antenna complex that captures photons, and an electron transfer chain that converts photonic excitation into a charge separation. This subunit is found at the monomer-monomer interface.</text>
</comment>
<comment type="subunit">
    <text evidence="1">PSII is composed of 1 copy each of membrane proteins PsbA, PsbB, PsbC, PsbD, PsbE, PsbF, PsbH, PsbI, PsbJ, PsbK, PsbL, PsbM, PsbT, PsbX, PsbY, PsbZ, Psb30/Ycf12, peripheral proteins PsbO, CyanoQ (PsbQ), PsbU, PsbV and a large number of cofactors. It forms dimeric complexes.</text>
</comment>
<comment type="subcellular location">
    <subcellularLocation>
        <location evidence="1">Cellular thylakoid membrane</location>
        <topology evidence="1">Single-pass membrane protein</topology>
    </subcellularLocation>
</comment>
<comment type="similarity">
    <text evidence="1">Belongs to the PsbM family.</text>
</comment>
<keyword id="KW-0472">Membrane</keyword>
<keyword id="KW-0602">Photosynthesis</keyword>
<keyword id="KW-0604">Photosystem II</keyword>
<keyword id="KW-0674">Reaction center</keyword>
<keyword id="KW-1185">Reference proteome</keyword>
<keyword id="KW-0793">Thylakoid</keyword>
<keyword id="KW-0812">Transmembrane</keyword>
<keyword id="KW-1133">Transmembrane helix</keyword>
<sequence>METNDLGFVASLMFILVPAIFLIVLYIGTNRSEA</sequence>
<proteinExistence type="inferred from homology"/>
<reference key="1">
    <citation type="submission" date="2005-08" db="EMBL/GenBank/DDBJ databases">
        <title>Complete sequence of Synechococcus sp. CC9902.</title>
        <authorList>
            <person name="Copeland A."/>
            <person name="Lucas S."/>
            <person name="Lapidus A."/>
            <person name="Barry K."/>
            <person name="Detter J.C."/>
            <person name="Glavina T."/>
            <person name="Hammon N."/>
            <person name="Israni S."/>
            <person name="Pitluck S."/>
            <person name="Martinez M."/>
            <person name="Schmutz J."/>
            <person name="Larimer F."/>
            <person name="Land M."/>
            <person name="Kyrpides N."/>
            <person name="Ivanova N."/>
            <person name="Richardson P."/>
        </authorList>
    </citation>
    <scope>NUCLEOTIDE SEQUENCE [LARGE SCALE GENOMIC DNA]</scope>
    <source>
        <strain>CC9902</strain>
    </source>
</reference>
<organism>
    <name type="scientific">Synechococcus sp. (strain CC9902)</name>
    <dbReference type="NCBI Taxonomy" id="316279"/>
    <lineage>
        <taxon>Bacteria</taxon>
        <taxon>Bacillati</taxon>
        <taxon>Cyanobacteriota</taxon>
        <taxon>Cyanophyceae</taxon>
        <taxon>Synechococcales</taxon>
        <taxon>Synechococcaceae</taxon>
        <taxon>Synechococcus</taxon>
    </lineage>
</organism>